<feature type="chain" id="PRO_1000073884" description="Thymidylate synthase">
    <location>
        <begin position="1"/>
        <end position="283"/>
    </location>
</feature>
<feature type="active site" description="Nucleophile" evidence="1">
    <location>
        <position position="160"/>
    </location>
</feature>
<feature type="binding site" evidence="1">
    <location>
        <position position="22"/>
    </location>
    <ligand>
        <name>dUMP</name>
        <dbReference type="ChEBI" id="CHEBI:246422"/>
    </ligand>
</feature>
<feature type="binding site" evidence="1">
    <location>
        <begin position="180"/>
        <end position="183"/>
    </location>
    <ligand>
        <name>dUMP</name>
        <dbReference type="ChEBI" id="CHEBI:246422"/>
    </ligand>
</feature>
<feature type="binding site" evidence="1">
    <location>
        <position position="183"/>
    </location>
    <ligand>
        <name>(6R)-5,10-methylene-5,6,7,8-tetrahydrofolate</name>
        <dbReference type="ChEBI" id="CHEBI:15636"/>
    </ligand>
</feature>
<feature type="binding site" evidence="1">
    <location>
        <position position="191"/>
    </location>
    <ligand>
        <name>dUMP</name>
        <dbReference type="ChEBI" id="CHEBI:246422"/>
    </ligand>
</feature>
<feature type="binding site" evidence="1">
    <location>
        <begin position="221"/>
        <end position="223"/>
    </location>
    <ligand>
        <name>dUMP</name>
        <dbReference type="ChEBI" id="CHEBI:246422"/>
    </ligand>
</feature>
<feature type="binding site" evidence="1">
    <location>
        <position position="282"/>
    </location>
    <ligand>
        <name>(6R)-5,10-methylene-5,6,7,8-tetrahydrofolate</name>
        <dbReference type="ChEBI" id="CHEBI:15636"/>
    </ligand>
</feature>
<comment type="function">
    <text evidence="1">Catalyzes the reductive methylation of 2'-deoxyuridine-5'-monophosphate (dUMP) to 2'-deoxythymidine-5'-monophosphate (dTMP) while utilizing 5,10-methylenetetrahydrofolate (mTHF) as the methyl donor and reductant in the reaction, yielding dihydrofolate (DHF) as a by-product. This enzymatic reaction provides an intracellular de novo source of dTMP, an essential precursor for DNA biosynthesis.</text>
</comment>
<comment type="catalytic activity">
    <reaction evidence="1">
        <text>dUMP + (6R)-5,10-methylene-5,6,7,8-tetrahydrofolate = 7,8-dihydrofolate + dTMP</text>
        <dbReference type="Rhea" id="RHEA:12104"/>
        <dbReference type="ChEBI" id="CHEBI:15636"/>
        <dbReference type="ChEBI" id="CHEBI:57451"/>
        <dbReference type="ChEBI" id="CHEBI:63528"/>
        <dbReference type="ChEBI" id="CHEBI:246422"/>
        <dbReference type="EC" id="2.1.1.45"/>
    </reaction>
</comment>
<comment type="pathway">
    <text evidence="1">Pyrimidine metabolism; dTTP biosynthesis.</text>
</comment>
<comment type="subunit">
    <text evidence="1">Homodimer.</text>
</comment>
<comment type="subcellular location">
    <subcellularLocation>
        <location evidence="1">Cytoplasm</location>
    </subcellularLocation>
</comment>
<comment type="similarity">
    <text evidence="1">Belongs to the thymidylate synthase family. Bacterial-type ThyA subfamily.</text>
</comment>
<gene>
    <name evidence="1" type="primary">thyA</name>
    <name type="ordered locus">Shal_1070</name>
</gene>
<name>TYSY_SHEHH</name>
<keyword id="KW-0963">Cytoplasm</keyword>
<keyword id="KW-0489">Methyltransferase</keyword>
<keyword id="KW-0545">Nucleotide biosynthesis</keyword>
<keyword id="KW-0808">Transferase</keyword>
<organism>
    <name type="scientific">Shewanella halifaxensis (strain HAW-EB4)</name>
    <dbReference type="NCBI Taxonomy" id="458817"/>
    <lineage>
        <taxon>Bacteria</taxon>
        <taxon>Pseudomonadati</taxon>
        <taxon>Pseudomonadota</taxon>
        <taxon>Gammaproteobacteria</taxon>
        <taxon>Alteromonadales</taxon>
        <taxon>Shewanellaceae</taxon>
        <taxon>Shewanella</taxon>
    </lineage>
</organism>
<sequence length="283" mass="32257">MKQYLDLCQRIIDEGTWVENSRTGKRCLTVINADLVYNVDKNEFPLITTRKSFYKAAIAELLGYIRGYDNAADFRKIGCNTWNANANDNQAWLNNPHRKGVDDMGRVYGVQGRAWSKPDGGTIDQLRKIVDDLSKGIDDRGEILSFYNPGEFHMGCLRPCMHTHNFSLLGDTLHLTSFQRSCDVPLGLNFNQVQVFTLLALMAQITGHKAGTAFHKIVNAHIYEDQLELMRDVQIKREPLSSPKLVINPDIKSLEDLETWVTMDDFEVTGYEHHEAIKYPFSV</sequence>
<accession>B0TIU4</accession>
<evidence type="ECO:0000255" key="1">
    <source>
        <dbReference type="HAMAP-Rule" id="MF_00008"/>
    </source>
</evidence>
<dbReference type="EC" id="2.1.1.45" evidence="1"/>
<dbReference type="EMBL" id="CP000931">
    <property type="protein sequence ID" value="ABZ75639.1"/>
    <property type="molecule type" value="Genomic_DNA"/>
</dbReference>
<dbReference type="RefSeq" id="WP_012276186.1">
    <property type="nucleotide sequence ID" value="NC_010334.1"/>
</dbReference>
<dbReference type="SMR" id="B0TIU4"/>
<dbReference type="STRING" id="458817.Shal_1070"/>
<dbReference type="KEGG" id="shl:Shal_1070"/>
<dbReference type="eggNOG" id="COG0207">
    <property type="taxonomic scope" value="Bacteria"/>
</dbReference>
<dbReference type="HOGENOM" id="CLU_021669_0_1_6"/>
<dbReference type="OrthoDB" id="9774633at2"/>
<dbReference type="UniPathway" id="UPA00575"/>
<dbReference type="Proteomes" id="UP000001317">
    <property type="component" value="Chromosome"/>
</dbReference>
<dbReference type="GO" id="GO:0005829">
    <property type="term" value="C:cytosol"/>
    <property type="evidence" value="ECO:0007669"/>
    <property type="project" value="TreeGrafter"/>
</dbReference>
<dbReference type="GO" id="GO:0004799">
    <property type="term" value="F:thymidylate synthase activity"/>
    <property type="evidence" value="ECO:0007669"/>
    <property type="project" value="UniProtKB-UniRule"/>
</dbReference>
<dbReference type="GO" id="GO:0006231">
    <property type="term" value="P:dTMP biosynthetic process"/>
    <property type="evidence" value="ECO:0007669"/>
    <property type="project" value="UniProtKB-UniRule"/>
</dbReference>
<dbReference type="GO" id="GO:0006235">
    <property type="term" value="P:dTTP biosynthetic process"/>
    <property type="evidence" value="ECO:0007669"/>
    <property type="project" value="UniProtKB-UniRule"/>
</dbReference>
<dbReference type="GO" id="GO:0032259">
    <property type="term" value="P:methylation"/>
    <property type="evidence" value="ECO:0007669"/>
    <property type="project" value="UniProtKB-KW"/>
</dbReference>
<dbReference type="CDD" id="cd00351">
    <property type="entry name" value="TS_Pyrimidine_HMase"/>
    <property type="match status" value="1"/>
</dbReference>
<dbReference type="Gene3D" id="3.30.572.10">
    <property type="entry name" value="Thymidylate synthase/dCMP hydroxymethylase domain"/>
    <property type="match status" value="1"/>
</dbReference>
<dbReference type="HAMAP" id="MF_00008">
    <property type="entry name" value="Thymidy_synth_bact"/>
    <property type="match status" value="1"/>
</dbReference>
<dbReference type="InterPro" id="IPR045097">
    <property type="entry name" value="Thymidate_synth/dCMP_Mease"/>
</dbReference>
<dbReference type="InterPro" id="IPR023451">
    <property type="entry name" value="Thymidate_synth/dCMP_Mease_dom"/>
</dbReference>
<dbReference type="InterPro" id="IPR036926">
    <property type="entry name" value="Thymidate_synth/dCMP_Mease_sf"/>
</dbReference>
<dbReference type="InterPro" id="IPR000398">
    <property type="entry name" value="Thymidylate_synthase"/>
</dbReference>
<dbReference type="NCBIfam" id="NF002498">
    <property type="entry name" value="PRK01827.1-4"/>
    <property type="match status" value="1"/>
</dbReference>
<dbReference type="NCBIfam" id="TIGR03284">
    <property type="entry name" value="thym_sym"/>
    <property type="match status" value="1"/>
</dbReference>
<dbReference type="PANTHER" id="PTHR11548:SF9">
    <property type="entry name" value="THYMIDYLATE SYNTHASE"/>
    <property type="match status" value="1"/>
</dbReference>
<dbReference type="PANTHER" id="PTHR11548">
    <property type="entry name" value="THYMIDYLATE SYNTHASE 1"/>
    <property type="match status" value="1"/>
</dbReference>
<dbReference type="Pfam" id="PF00303">
    <property type="entry name" value="Thymidylat_synt"/>
    <property type="match status" value="1"/>
</dbReference>
<dbReference type="PRINTS" id="PR00108">
    <property type="entry name" value="THYMDSNTHASE"/>
</dbReference>
<dbReference type="SUPFAM" id="SSF55831">
    <property type="entry name" value="Thymidylate synthase/dCMP hydroxymethylase"/>
    <property type="match status" value="1"/>
</dbReference>
<protein>
    <recommendedName>
        <fullName evidence="1">Thymidylate synthase</fullName>
        <shortName evidence="1">TS</shortName>
        <shortName evidence="1">TSase</shortName>
        <ecNumber evidence="1">2.1.1.45</ecNumber>
    </recommendedName>
</protein>
<proteinExistence type="inferred from homology"/>
<reference key="1">
    <citation type="submission" date="2008-01" db="EMBL/GenBank/DDBJ databases">
        <title>Complete sequence of Shewanella halifaxensis HAW-EB4.</title>
        <authorList>
            <consortium name="US DOE Joint Genome Institute"/>
            <person name="Copeland A."/>
            <person name="Lucas S."/>
            <person name="Lapidus A."/>
            <person name="Glavina del Rio T."/>
            <person name="Dalin E."/>
            <person name="Tice H."/>
            <person name="Bruce D."/>
            <person name="Goodwin L."/>
            <person name="Pitluck S."/>
            <person name="Sims D."/>
            <person name="Brettin T."/>
            <person name="Detter J.C."/>
            <person name="Han C."/>
            <person name="Kuske C.R."/>
            <person name="Schmutz J."/>
            <person name="Larimer F."/>
            <person name="Land M."/>
            <person name="Hauser L."/>
            <person name="Kyrpides N."/>
            <person name="Kim E."/>
            <person name="Zhao J.-S."/>
            <person name="Richardson P."/>
        </authorList>
    </citation>
    <scope>NUCLEOTIDE SEQUENCE [LARGE SCALE GENOMIC DNA]</scope>
    <source>
        <strain>HAW-EB4</strain>
    </source>
</reference>